<name>TOM7_SCHPO</name>
<evidence type="ECO:0000250" key="1"/>
<evidence type="ECO:0000255" key="2"/>
<evidence type="ECO:0000305" key="3"/>
<feature type="chain" id="PRO_0000046766" description="Mitochondrial import receptor subunit tom7">
    <location>
        <begin position="1"/>
        <end position="52"/>
    </location>
</feature>
<feature type="topological domain" description="Cytoplasmic" evidence="1">
    <location>
        <begin position="1"/>
        <end position="19"/>
    </location>
</feature>
<feature type="transmembrane region" description="Helical" evidence="2">
    <location>
        <begin position="20"/>
        <end position="36"/>
    </location>
</feature>
<feature type="topological domain" description="Mitochondrial intermembrane" evidence="1">
    <location>
        <begin position="37"/>
        <end position="52"/>
    </location>
</feature>
<comment type="subunit">
    <text>Forms part of the preprotein translocase complex of the outer mitochondrial membrane (TOM complex) which consists of at least 8 different proteins (tom5, tom6, tom7, tom20, tom22, tom37, tom40 and tom70).</text>
</comment>
<comment type="subcellular location">
    <subcellularLocation>
        <location evidence="1">Mitochondrion outer membrane</location>
        <topology evidence="2">Single-pass membrane protein</topology>
    </subcellularLocation>
</comment>
<comment type="similarity">
    <text evidence="3">Belongs to the Tom7 family.</text>
</comment>
<comment type="sequence caution" evidence="3">
    <conflict type="erroneous gene model prediction">
        <sequence resource="EMBL-CDS" id="CAA16905"/>
    </conflict>
</comment>
<sequence length="52" mass="6039">MQISEESKERLVKVFNIGKTVTHYGWIPLILWLGYTQSNPKPQLMRVINPLA</sequence>
<dbReference type="EMBL" id="CU329671">
    <property type="protein sequence ID" value="CAA16905.1"/>
    <property type="status" value="ALT_SEQ"/>
    <property type="molecule type" value="Genomic_DNA"/>
</dbReference>
<dbReference type="PIR" id="T40034">
    <property type="entry name" value="T40034"/>
</dbReference>
<dbReference type="SMR" id="O42999"/>
<dbReference type="BioGRID" id="277030">
    <property type="interactions" value="2"/>
</dbReference>
<dbReference type="FunCoup" id="O42999">
    <property type="interactions" value="28"/>
</dbReference>
<dbReference type="STRING" id="284812.O42999"/>
<dbReference type="iPTMnet" id="O42999"/>
<dbReference type="PaxDb" id="4896-SPBC27B12.10c.1"/>
<dbReference type="EnsemblFungi" id="SPBC27B12.10c.1">
    <property type="protein sequence ID" value="SPBC27B12.10c.1:pep"/>
    <property type="gene ID" value="SPBC27B12.10c"/>
</dbReference>
<dbReference type="PomBase" id="SPBC27B12.10c">
    <property type="gene designation" value="tom7"/>
</dbReference>
<dbReference type="VEuPathDB" id="FungiDB:SPBC27B12.10c"/>
<dbReference type="eggNOG" id="KOG4449">
    <property type="taxonomic scope" value="Eukaryota"/>
</dbReference>
<dbReference type="InParanoid" id="O42999"/>
<dbReference type="PRO" id="PR:O42999"/>
<dbReference type="Proteomes" id="UP000002485">
    <property type="component" value="Chromosome II"/>
</dbReference>
<dbReference type="GO" id="GO:0005783">
    <property type="term" value="C:endoplasmic reticulum"/>
    <property type="evidence" value="ECO:0007005"/>
    <property type="project" value="PomBase"/>
</dbReference>
<dbReference type="GO" id="GO:0005741">
    <property type="term" value="C:mitochondrial outer membrane"/>
    <property type="evidence" value="ECO:0000318"/>
    <property type="project" value="GO_Central"/>
</dbReference>
<dbReference type="GO" id="GO:0005742">
    <property type="term" value="C:mitochondrial outer membrane translocase complex"/>
    <property type="evidence" value="ECO:0000250"/>
    <property type="project" value="PomBase"/>
</dbReference>
<dbReference type="GO" id="GO:0016887">
    <property type="term" value="F:ATP hydrolysis activity"/>
    <property type="evidence" value="ECO:0000305"/>
    <property type="project" value="PomBase"/>
</dbReference>
<dbReference type="GO" id="GO:0005198">
    <property type="term" value="F:structural molecule activity"/>
    <property type="evidence" value="ECO:0000250"/>
    <property type="project" value="PomBase"/>
</dbReference>
<dbReference type="GO" id="GO:0030150">
    <property type="term" value="P:protein import into mitochondrial matrix"/>
    <property type="evidence" value="ECO:0000250"/>
    <property type="project" value="PomBase"/>
</dbReference>
<dbReference type="GO" id="GO:0045039">
    <property type="term" value="P:protein insertion into mitochondrial inner membrane"/>
    <property type="evidence" value="ECO:0000250"/>
    <property type="project" value="PomBase"/>
</dbReference>
<dbReference type="GO" id="GO:0045040">
    <property type="term" value="P:protein insertion into mitochondrial outer membrane"/>
    <property type="evidence" value="ECO:0000318"/>
    <property type="project" value="GO_Central"/>
</dbReference>
<dbReference type="InterPro" id="IPR012621">
    <property type="entry name" value="Tom7"/>
</dbReference>
<dbReference type="PANTHER" id="PTHR34944">
    <property type="entry name" value="MITOCHONDRIAL IMPORT RECEPTOR SUBUNIT TOM7"/>
    <property type="match status" value="1"/>
</dbReference>
<dbReference type="PANTHER" id="PTHR34944:SF2">
    <property type="entry name" value="MITOCHONDRIAL IMPORT RECEPTOR SUBUNIT TOM7"/>
    <property type="match status" value="1"/>
</dbReference>
<dbReference type="Pfam" id="PF08038">
    <property type="entry name" value="Tom7"/>
    <property type="match status" value="1"/>
</dbReference>
<reference key="1">
    <citation type="journal article" date="2002" name="Nature">
        <title>The genome sequence of Schizosaccharomyces pombe.</title>
        <authorList>
            <person name="Wood V."/>
            <person name="Gwilliam R."/>
            <person name="Rajandream M.A."/>
            <person name="Lyne M.H."/>
            <person name="Lyne R."/>
            <person name="Stewart A."/>
            <person name="Sgouros J.G."/>
            <person name="Peat N."/>
            <person name="Hayles J."/>
            <person name="Baker S.G."/>
            <person name="Basham D."/>
            <person name="Bowman S."/>
            <person name="Brooks K."/>
            <person name="Brown D."/>
            <person name="Brown S."/>
            <person name="Chillingworth T."/>
            <person name="Churcher C.M."/>
            <person name="Collins M."/>
            <person name="Connor R."/>
            <person name="Cronin A."/>
            <person name="Davis P."/>
            <person name="Feltwell T."/>
            <person name="Fraser A."/>
            <person name="Gentles S."/>
            <person name="Goble A."/>
            <person name="Hamlin N."/>
            <person name="Harris D.E."/>
            <person name="Hidalgo J."/>
            <person name="Hodgson G."/>
            <person name="Holroyd S."/>
            <person name="Hornsby T."/>
            <person name="Howarth S."/>
            <person name="Huckle E.J."/>
            <person name="Hunt S."/>
            <person name="Jagels K."/>
            <person name="James K.D."/>
            <person name="Jones L."/>
            <person name="Jones M."/>
            <person name="Leather S."/>
            <person name="McDonald S."/>
            <person name="McLean J."/>
            <person name="Mooney P."/>
            <person name="Moule S."/>
            <person name="Mungall K.L."/>
            <person name="Murphy L.D."/>
            <person name="Niblett D."/>
            <person name="Odell C."/>
            <person name="Oliver K."/>
            <person name="O'Neil S."/>
            <person name="Pearson D."/>
            <person name="Quail M.A."/>
            <person name="Rabbinowitsch E."/>
            <person name="Rutherford K.M."/>
            <person name="Rutter S."/>
            <person name="Saunders D."/>
            <person name="Seeger K."/>
            <person name="Sharp S."/>
            <person name="Skelton J."/>
            <person name="Simmonds M.N."/>
            <person name="Squares R."/>
            <person name="Squares S."/>
            <person name="Stevens K."/>
            <person name="Taylor K."/>
            <person name="Taylor R.G."/>
            <person name="Tivey A."/>
            <person name="Walsh S.V."/>
            <person name="Warren T."/>
            <person name="Whitehead S."/>
            <person name="Woodward J.R."/>
            <person name="Volckaert G."/>
            <person name="Aert R."/>
            <person name="Robben J."/>
            <person name="Grymonprez B."/>
            <person name="Weltjens I."/>
            <person name="Vanstreels E."/>
            <person name="Rieger M."/>
            <person name="Schaefer M."/>
            <person name="Mueller-Auer S."/>
            <person name="Gabel C."/>
            <person name="Fuchs M."/>
            <person name="Duesterhoeft A."/>
            <person name="Fritzc C."/>
            <person name="Holzer E."/>
            <person name="Moestl D."/>
            <person name="Hilbert H."/>
            <person name="Borzym K."/>
            <person name="Langer I."/>
            <person name="Beck A."/>
            <person name="Lehrach H."/>
            <person name="Reinhardt R."/>
            <person name="Pohl T.M."/>
            <person name="Eger P."/>
            <person name="Zimmermann W."/>
            <person name="Wedler H."/>
            <person name="Wambutt R."/>
            <person name="Purnelle B."/>
            <person name="Goffeau A."/>
            <person name="Cadieu E."/>
            <person name="Dreano S."/>
            <person name="Gloux S."/>
            <person name="Lelaure V."/>
            <person name="Mottier S."/>
            <person name="Galibert F."/>
            <person name="Aves S.J."/>
            <person name="Xiang Z."/>
            <person name="Hunt C."/>
            <person name="Moore K."/>
            <person name="Hurst S.M."/>
            <person name="Lucas M."/>
            <person name="Rochet M."/>
            <person name="Gaillardin C."/>
            <person name="Tallada V.A."/>
            <person name="Garzon A."/>
            <person name="Thode G."/>
            <person name="Daga R.R."/>
            <person name="Cruzado L."/>
            <person name="Jimenez J."/>
            <person name="Sanchez M."/>
            <person name="del Rey F."/>
            <person name="Benito J."/>
            <person name="Dominguez A."/>
            <person name="Revuelta J.L."/>
            <person name="Moreno S."/>
            <person name="Armstrong J."/>
            <person name="Forsburg S.L."/>
            <person name="Cerutti L."/>
            <person name="Lowe T."/>
            <person name="McCombie W.R."/>
            <person name="Paulsen I."/>
            <person name="Potashkin J."/>
            <person name="Shpakovski G.V."/>
            <person name="Ussery D."/>
            <person name="Barrell B.G."/>
            <person name="Nurse P."/>
        </authorList>
    </citation>
    <scope>NUCLEOTIDE SEQUENCE [LARGE SCALE GENOMIC DNA]</scope>
    <source>
        <strain>972 / ATCC 24843</strain>
    </source>
</reference>
<reference key="2">
    <citation type="journal article" date="2014" name="Nat. Struct. Mol. Biol.">
        <title>The translational landscape of fission-yeast meiosis and sporulation.</title>
        <authorList>
            <person name="Duncan C.D."/>
            <person name="Mata J."/>
        </authorList>
    </citation>
    <scope>GENE MODEL REVISION</scope>
</reference>
<gene>
    <name type="primary">tom7</name>
    <name type="ORF">SPBC27B12.10c</name>
</gene>
<keyword id="KW-0472">Membrane</keyword>
<keyword id="KW-0496">Mitochondrion</keyword>
<keyword id="KW-1000">Mitochondrion outer membrane</keyword>
<keyword id="KW-0653">Protein transport</keyword>
<keyword id="KW-1185">Reference proteome</keyword>
<keyword id="KW-0812">Transmembrane</keyword>
<keyword id="KW-1133">Transmembrane helix</keyword>
<keyword id="KW-0813">Transport</keyword>
<organism>
    <name type="scientific">Schizosaccharomyces pombe (strain 972 / ATCC 24843)</name>
    <name type="common">Fission yeast</name>
    <dbReference type="NCBI Taxonomy" id="284812"/>
    <lineage>
        <taxon>Eukaryota</taxon>
        <taxon>Fungi</taxon>
        <taxon>Dikarya</taxon>
        <taxon>Ascomycota</taxon>
        <taxon>Taphrinomycotina</taxon>
        <taxon>Schizosaccharomycetes</taxon>
        <taxon>Schizosaccharomycetales</taxon>
        <taxon>Schizosaccharomycetaceae</taxon>
        <taxon>Schizosaccharomyces</taxon>
    </lineage>
</organism>
<accession>O42999</accession>
<protein>
    <recommendedName>
        <fullName>Mitochondrial import receptor subunit tom7</fullName>
    </recommendedName>
    <alternativeName>
        <fullName>Translocase of outer membrane 7 kDa subunit</fullName>
    </alternativeName>
</protein>
<proteinExistence type="inferred from homology"/>